<protein>
    <recommendedName>
        <fullName evidence="1">3-ketoacyl-CoA thiolase</fullName>
        <ecNumber evidence="1">2.3.1.16</ecNumber>
    </recommendedName>
    <alternativeName>
        <fullName evidence="1">ACSs</fullName>
    </alternativeName>
    <alternativeName>
        <fullName evidence="1">Acetyl-CoA acyltransferase</fullName>
    </alternativeName>
    <alternativeName>
        <fullName evidence="1">Acyl-CoA ligase</fullName>
    </alternativeName>
    <alternativeName>
        <fullName evidence="1">Beta-ketothiolase</fullName>
    </alternativeName>
    <alternativeName>
        <fullName evidence="1">Fatty acid oxidation complex subunit beta</fullName>
    </alternativeName>
</protein>
<accession>Q12P12</accession>
<comment type="function">
    <text evidence="1">Catalyzes the final step of fatty acid oxidation in which acetyl-CoA is released and the CoA ester of a fatty acid two carbons shorter is formed.</text>
</comment>
<comment type="catalytic activity">
    <reaction evidence="1">
        <text>an acyl-CoA + acetyl-CoA = a 3-oxoacyl-CoA + CoA</text>
        <dbReference type="Rhea" id="RHEA:21564"/>
        <dbReference type="ChEBI" id="CHEBI:57287"/>
        <dbReference type="ChEBI" id="CHEBI:57288"/>
        <dbReference type="ChEBI" id="CHEBI:58342"/>
        <dbReference type="ChEBI" id="CHEBI:90726"/>
        <dbReference type="EC" id="2.3.1.16"/>
    </reaction>
</comment>
<comment type="pathway">
    <text evidence="1">Lipid metabolism; fatty acid beta-oxidation.</text>
</comment>
<comment type="subunit">
    <text evidence="1">Heterotetramer of two alpha chains (FadJ) and two beta chains (FadI).</text>
</comment>
<comment type="subcellular location">
    <subcellularLocation>
        <location evidence="1">Cytoplasm</location>
    </subcellularLocation>
</comment>
<comment type="similarity">
    <text evidence="1">Belongs to the thiolase-like superfamily. Thiolase family.</text>
</comment>
<name>FADI_SHEDO</name>
<evidence type="ECO:0000255" key="1">
    <source>
        <dbReference type="HAMAP-Rule" id="MF_01618"/>
    </source>
</evidence>
<organism>
    <name type="scientific">Shewanella denitrificans (strain OS217 / ATCC BAA-1090 / DSM 15013)</name>
    <dbReference type="NCBI Taxonomy" id="318161"/>
    <lineage>
        <taxon>Bacteria</taxon>
        <taxon>Pseudomonadati</taxon>
        <taxon>Pseudomonadota</taxon>
        <taxon>Gammaproteobacteria</taxon>
        <taxon>Alteromonadales</taxon>
        <taxon>Shewanellaceae</taxon>
        <taxon>Shewanella</taxon>
    </lineage>
</organism>
<feature type="chain" id="PRO_1000069509" description="3-ketoacyl-CoA thiolase">
    <location>
        <begin position="1"/>
        <end position="436"/>
    </location>
</feature>
<feature type="active site" description="Acyl-thioester intermediate" evidence="1">
    <location>
        <position position="99"/>
    </location>
</feature>
<feature type="active site" description="Proton acceptor" evidence="1">
    <location>
        <position position="392"/>
    </location>
</feature>
<feature type="active site" description="Proton acceptor" evidence="1">
    <location>
        <position position="422"/>
    </location>
</feature>
<proteinExistence type="inferred from homology"/>
<keyword id="KW-0012">Acyltransferase</keyword>
<keyword id="KW-0963">Cytoplasm</keyword>
<keyword id="KW-0276">Fatty acid metabolism</keyword>
<keyword id="KW-0442">Lipid degradation</keyword>
<keyword id="KW-0443">Lipid metabolism</keyword>
<keyword id="KW-1185">Reference proteome</keyword>
<keyword id="KW-0808">Transferase</keyword>
<reference key="1">
    <citation type="submission" date="2006-03" db="EMBL/GenBank/DDBJ databases">
        <title>Complete sequence of Shewanella denitrificans OS217.</title>
        <authorList>
            <consortium name="US DOE Joint Genome Institute"/>
            <person name="Copeland A."/>
            <person name="Lucas S."/>
            <person name="Lapidus A."/>
            <person name="Barry K."/>
            <person name="Detter J.C."/>
            <person name="Glavina del Rio T."/>
            <person name="Hammon N."/>
            <person name="Israni S."/>
            <person name="Dalin E."/>
            <person name="Tice H."/>
            <person name="Pitluck S."/>
            <person name="Brettin T."/>
            <person name="Bruce D."/>
            <person name="Han C."/>
            <person name="Tapia R."/>
            <person name="Gilna P."/>
            <person name="Kiss H."/>
            <person name="Schmutz J."/>
            <person name="Larimer F."/>
            <person name="Land M."/>
            <person name="Hauser L."/>
            <person name="Kyrpides N."/>
            <person name="Lykidis A."/>
            <person name="Richardson P."/>
        </authorList>
    </citation>
    <scope>NUCLEOTIDE SEQUENCE [LARGE SCALE GENOMIC DNA]</scope>
    <source>
        <strain>OS217 / ATCC BAA-1090 / DSM 15013</strain>
    </source>
</reference>
<gene>
    <name evidence="1" type="primary">fadI</name>
    <name type="ordered locus">Sden_1529</name>
</gene>
<dbReference type="EC" id="2.3.1.16" evidence="1"/>
<dbReference type="EMBL" id="CP000302">
    <property type="protein sequence ID" value="ABE54814.1"/>
    <property type="molecule type" value="Genomic_DNA"/>
</dbReference>
<dbReference type="RefSeq" id="WP_011495972.1">
    <property type="nucleotide sequence ID" value="NC_007954.1"/>
</dbReference>
<dbReference type="SMR" id="Q12P12"/>
<dbReference type="STRING" id="318161.Sden_1529"/>
<dbReference type="KEGG" id="sdn:Sden_1529"/>
<dbReference type="eggNOG" id="COG0183">
    <property type="taxonomic scope" value="Bacteria"/>
</dbReference>
<dbReference type="HOGENOM" id="CLU_031026_2_0_6"/>
<dbReference type="OrthoDB" id="1402717at2"/>
<dbReference type="UniPathway" id="UPA00659"/>
<dbReference type="Proteomes" id="UP000001982">
    <property type="component" value="Chromosome"/>
</dbReference>
<dbReference type="GO" id="GO:0005829">
    <property type="term" value="C:cytosol"/>
    <property type="evidence" value="ECO:0007669"/>
    <property type="project" value="TreeGrafter"/>
</dbReference>
<dbReference type="GO" id="GO:0003988">
    <property type="term" value="F:acetyl-CoA C-acyltransferase activity"/>
    <property type="evidence" value="ECO:0007669"/>
    <property type="project" value="UniProtKB-UniRule"/>
</dbReference>
<dbReference type="GO" id="GO:0006635">
    <property type="term" value="P:fatty acid beta-oxidation"/>
    <property type="evidence" value="ECO:0007669"/>
    <property type="project" value="UniProtKB-UniRule"/>
</dbReference>
<dbReference type="CDD" id="cd00751">
    <property type="entry name" value="thiolase"/>
    <property type="match status" value="1"/>
</dbReference>
<dbReference type="FunFam" id="3.40.47.10:FF:000011">
    <property type="entry name" value="3-ketoacyl-CoA thiolase"/>
    <property type="match status" value="1"/>
</dbReference>
<dbReference type="Gene3D" id="3.40.47.10">
    <property type="match status" value="1"/>
</dbReference>
<dbReference type="HAMAP" id="MF_01618">
    <property type="entry name" value="FadI"/>
    <property type="match status" value="1"/>
</dbReference>
<dbReference type="InterPro" id="IPR012806">
    <property type="entry name" value="Ac-CoA_C-AcTrfase_FadI"/>
</dbReference>
<dbReference type="InterPro" id="IPR002155">
    <property type="entry name" value="Thiolase"/>
</dbReference>
<dbReference type="InterPro" id="IPR016039">
    <property type="entry name" value="Thiolase-like"/>
</dbReference>
<dbReference type="InterPro" id="IPR020610">
    <property type="entry name" value="Thiolase_AS"/>
</dbReference>
<dbReference type="InterPro" id="IPR020617">
    <property type="entry name" value="Thiolase_C"/>
</dbReference>
<dbReference type="InterPro" id="IPR020613">
    <property type="entry name" value="Thiolase_CS"/>
</dbReference>
<dbReference type="InterPro" id="IPR020616">
    <property type="entry name" value="Thiolase_N"/>
</dbReference>
<dbReference type="NCBIfam" id="TIGR01930">
    <property type="entry name" value="AcCoA-C-Actrans"/>
    <property type="match status" value="1"/>
</dbReference>
<dbReference type="NCBIfam" id="TIGR02446">
    <property type="entry name" value="FadI"/>
    <property type="match status" value="1"/>
</dbReference>
<dbReference type="NCBIfam" id="NF006516">
    <property type="entry name" value="PRK08963.1"/>
    <property type="match status" value="1"/>
</dbReference>
<dbReference type="PANTHER" id="PTHR18919:SF107">
    <property type="entry name" value="ACETYL-COA ACETYLTRANSFERASE, CYTOSOLIC"/>
    <property type="match status" value="1"/>
</dbReference>
<dbReference type="PANTHER" id="PTHR18919">
    <property type="entry name" value="ACETYL-COA C-ACYLTRANSFERASE"/>
    <property type="match status" value="1"/>
</dbReference>
<dbReference type="Pfam" id="PF02803">
    <property type="entry name" value="Thiolase_C"/>
    <property type="match status" value="1"/>
</dbReference>
<dbReference type="Pfam" id="PF00108">
    <property type="entry name" value="Thiolase_N"/>
    <property type="match status" value="1"/>
</dbReference>
<dbReference type="PIRSF" id="PIRSF000429">
    <property type="entry name" value="Ac-CoA_Ac_transf"/>
    <property type="match status" value="1"/>
</dbReference>
<dbReference type="SUPFAM" id="SSF53901">
    <property type="entry name" value="Thiolase-like"/>
    <property type="match status" value="2"/>
</dbReference>
<dbReference type="PROSITE" id="PS00737">
    <property type="entry name" value="THIOLASE_2"/>
    <property type="match status" value="1"/>
</dbReference>
<dbReference type="PROSITE" id="PS00099">
    <property type="entry name" value="THIOLASE_3"/>
    <property type="match status" value="1"/>
</dbReference>
<sequence length="436" mass="46632">MSDRQQVKNARGERIAIVAGLRTPFAKQATAFHGVSALDMGKMVVNELISRSELDPKLIEQLVYGQVVLMPAAPNIAREIVLGTGMNVSTDAYSVTRACATSFQSAVNVAESIMTGNVEIGIAGGADSSSVLPITVSKKLAHALVDLNKARTLGQKFAIMRRLGLKDLMPVPPAVAEYSTGLSMGQTAEQMAKTYGISRADQDALAHRSHTLATETWNSGNLRDEVMTAHVAPYKQFIDRDNNIRENSVLESYAKLRPAFDRKHGSVTAANSTPLTDGASAIILMSEGRAKALGYQPIGYIKSYAFTAIDVWQDMLMGPSYATPLALKRAGMELEDLTLIEMHEAFAAQTLANMQMFGSKKFAAEKLGRNRAIGDIDMSKFNVLGGSLAYGHPFAATGTRLITQVCRELKRRGGGTGLATACAAGGLGAAMIVEVE</sequence>